<protein>
    <recommendedName>
        <fullName>Endochitinase 2</fullName>
        <ecNumber>3.2.1.14</ecNumber>
    </recommendedName>
</protein>
<reference key="1">
    <citation type="journal article" date="1995" name="Gene">
        <title>Isolation and characterization of two chitinase-encoding genes (cts1, cts2) from the fungus Coccidioides immitis.</title>
        <authorList>
            <person name="Pishko E.J."/>
            <person name="Kirkland T.N."/>
            <person name="Cole G.T."/>
        </authorList>
    </citation>
    <scope>NUCLEOTIDE SEQUENCE [GENOMIC DNA]</scope>
    <source>
        <strain>C735</strain>
    </source>
</reference>
<reference key="2">
    <citation type="journal article" date="2009" name="Genome Res.">
        <title>Comparative genomic analyses of the human fungal pathogens Coccidioides and their relatives.</title>
        <authorList>
            <person name="Sharpton T.J."/>
            <person name="Stajich J.E."/>
            <person name="Rounsley S.D."/>
            <person name="Gardner M.J."/>
            <person name="Wortman J.R."/>
            <person name="Jordar V.S."/>
            <person name="Maiti R."/>
            <person name="Kodira C.D."/>
            <person name="Neafsey D.E."/>
            <person name="Zeng Q."/>
            <person name="Hung C.-Y."/>
            <person name="McMahan C."/>
            <person name="Muszewska A."/>
            <person name="Grynberg M."/>
            <person name="Mandel M.A."/>
            <person name="Kellner E.M."/>
            <person name="Barker B.M."/>
            <person name="Galgiani J.N."/>
            <person name="Orbach M.J."/>
            <person name="Kirkland T.N."/>
            <person name="Cole G.T."/>
            <person name="Henn M.R."/>
            <person name="Birren B.W."/>
            <person name="Taylor J.W."/>
        </authorList>
    </citation>
    <scope>NUCLEOTIDE SEQUENCE [LARGE SCALE GENOMIC DNA]</scope>
    <source>
        <strain>C735</strain>
    </source>
</reference>
<evidence type="ECO:0000255" key="1"/>
<evidence type="ECO:0000255" key="2">
    <source>
        <dbReference type="PROSITE-ProRule" id="PRU01258"/>
    </source>
</evidence>
<evidence type="ECO:0000256" key="3">
    <source>
        <dbReference type="SAM" id="MobiDB-lite"/>
    </source>
</evidence>
<evidence type="ECO:0000305" key="4"/>
<gene>
    <name type="primary">CTS2</name>
    <name type="ORF">CPC735_058480</name>
</gene>
<keyword id="KW-0119">Carbohydrate metabolism</keyword>
<keyword id="KW-1003">Cell membrane</keyword>
<keyword id="KW-0146">Chitin degradation</keyword>
<keyword id="KW-0147">Chitin-binding</keyword>
<keyword id="KW-0325">Glycoprotein</keyword>
<keyword id="KW-0326">Glycosidase</keyword>
<keyword id="KW-0336">GPI-anchor</keyword>
<keyword id="KW-0378">Hydrolase</keyword>
<keyword id="KW-0449">Lipoprotein</keyword>
<keyword id="KW-0472">Membrane</keyword>
<keyword id="KW-0624">Polysaccharide degradation</keyword>
<keyword id="KW-0732">Signal</keyword>
<dbReference type="EC" id="3.2.1.14"/>
<dbReference type="EMBL" id="L41662">
    <property type="protein sequence ID" value="AAA92642.1"/>
    <property type="status" value="ALT_FRAME"/>
    <property type="molecule type" value="Genomic_DNA"/>
</dbReference>
<dbReference type="EMBL" id="ACFW01000049">
    <property type="protein sequence ID" value="EER24478.1"/>
    <property type="status" value="ALT_SEQ"/>
    <property type="molecule type" value="Genomic_DNA"/>
</dbReference>
<dbReference type="RefSeq" id="XP_003066623.1">
    <property type="nucleotide sequence ID" value="XM_003066577.1"/>
</dbReference>
<dbReference type="SMR" id="P54197"/>
<dbReference type="CAZy" id="GH18">
    <property type="family name" value="Glycoside Hydrolase Family 18"/>
</dbReference>
<dbReference type="GlyCosmos" id="P54197">
    <property type="glycosylation" value="1 site, No reported glycans"/>
</dbReference>
<dbReference type="GeneID" id="9692093"/>
<dbReference type="KEGG" id="cpw:9692093"/>
<dbReference type="HOGENOM" id="CLU_009107_2_0_1"/>
<dbReference type="OrthoDB" id="6020543at2759"/>
<dbReference type="Proteomes" id="UP000009084">
    <property type="component" value="Unassembled WGS sequence"/>
</dbReference>
<dbReference type="GO" id="GO:0005576">
    <property type="term" value="C:extracellular region"/>
    <property type="evidence" value="ECO:0007669"/>
    <property type="project" value="TreeGrafter"/>
</dbReference>
<dbReference type="GO" id="GO:0005886">
    <property type="term" value="C:plasma membrane"/>
    <property type="evidence" value="ECO:0007669"/>
    <property type="project" value="UniProtKB-SubCell"/>
</dbReference>
<dbReference type="GO" id="GO:0098552">
    <property type="term" value="C:side of membrane"/>
    <property type="evidence" value="ECO:0007669"/>
    <property type="project" value="UniProtKB-KW"/>
</dbReference>
<dbReference type="GO" id="GO:0008061">
    <property type="term" value="F:chitin binding"/>
    <property type="evidence" value="ECO:0007669"/>
    <property type="project" value="UniProtKB-KW"/>
</dbReference>
<dbReference type="GO" id="GO:0008843">
    <property type="term" value="F:endochitinase activity"/>
    <property type="evidence" value="ECO:0007669"/>
    <property type="project" value="UniProtKB-EC"/>
</dbReference>
<dbReference type="GO" id="GO:0006032">
    <property type="term" value="P:chitin catabolic process"/>
    <property type="evidence" value="ECO:0007669"/>
    <property type="project" value="UniProtKB-KW"/>
</dbReference>
<dbReference type="GO" id="GO:0000272">
    <property type="term" value="P:polysaccharide catabolic process"/>
    <property type="evidence" value="ECO:0007669"/>
    <property type="project" value="UniProtKB-KW"/>
</dbReference>
<dbReference type="CDD" id="cd02877">
    <property type="entry name" value="GH18_hevamine_XipI_class_III"/>
    <property type="match status" value="1"/>
</dbReference>
<dbReference type="FunFam" id="3.20.20.80:FF:000150">
    <property type="entry name" value="Class III chitinase ChiA1"/>
    <property type="match status" value="1"/>
</dbReference>
<dbReference type="Gene3D" id="3.20.20.80">
    <property type="entry name" value="Glycosidases"/>
    <property type="match status" value="1"/>
</dbReference>
<dbReference type="InterPro" id="IPR045321">
    <property type="entry name" value="Cts1-like"/>
</dbReference>
<dbReference type="InterPro" id="IPR001223">
    <property type="entry name" value="Glyco_hydro18_cat"/>
</dbReference>
<dbReference type="InterPro" id="IPR001579">
    <property type="entry name" value="Glyco_hydro_18_chit_AS"/>
</dbReference>
<dbReference type="InterPro" id="IPR017853">
    <property type="entry name" value="Glycoside_hydrolase_SF"/>
</dbReference>
<dbReference type="InterPro" id="IPR050542">
    <property type="entry name" value="Glycosyl_Hydrlase18_Chitinase"/>
</dbReference>
<dbReference type="PANTHER" id="PTHR45708">
    <property type="entry name" value="ENDOCHITINASE"/>
    <property type="match status" value="1"/>
</dbReference>
<dbReference type="PANTHER" id="PTHR45708:SF47">
    <property type="entry name" value="ENDOCHITINASE A"/>
    <property type="match status" value="1"/>
</dbReference>
<dbReference type="Pfam" id="PF00704">
    <property type="entry name" value="Glyco_hydro_18"/>
    <property type="match status" value="1"/>
</dbReference>
<dbReference type="SUPFAM" id="SSF51445">
    <property type="entry name" value="(Trans)glycosidases"/>
    <property type="match status" value="1"/>
</dbReference>
<dbReference type="PROSITE" id="PS01095">
    <property type="entry name" value="GH18_1"/>
    <property type="match status" value="1"/>
</dbReference>
<dbReference type="PROSITE" id="PS51910">
    <property type="entry name" value="GH18_2"/>
    <property type="match status" value="1"/>
</dbReference>
<accession>P54197</accession>
<accession>C5PIX5</accession>
<comment type="function">
    <text>May be associated with endosporulation.</text>
</comment>
<comment type="catalytic activity">
    <reaction>
        <text>Random endo-hydrolysis of N-acetyl-beta-D-glucosaminide (1-&gt;4)-beta-linkages in chitin and chitodextrins.</text>
        <dbReference type="EC" id="3.2.1.14"/>
    </reaction>
</comment>
<comment type="subcellular location">
    <subcellularLocation>
        <location evidence="4">Cell membrane</location>
        <topology evidence="4">Lipid-anchor</topology>
        <topology evidence="4">GPI-anchor</topology>
    </subcellularLocation>
</comment>
<comment type="similarity">
    <text evidence="4">Belongs to the glycosyl hydrolase 18 family. Chitinase class III subfamily.</text>
</comment>
<comment type="sequence caution" evidence="4">
    <conflict type="frameshift">
        <sequence resource="EMBL-CDS" id="AAA92642"/>
    </conflict>
</comment>
<comment type="sequence caution" evidence="4">
    <conflict type="erroneous gene model prediction">
        <sequence resource="EMBL-CDS" id="EER24478"/>
    </conflict>
</comment>
<proteinExistence type="inferred from homology"/>
<name>CHI2_COCP7</name>
<feature type="signal peptide" evidence="1">
    <location>
        <begin position="1"/>
        <end position="22"/>
    </location>
</feature>
<feature type="chain" id="PRO_0000011928" description="Endochitinase 2">
    <location>
        <begin position="23"/>
        <end position="826"/>
    </location>
</feature>
<feature type="propeptide" id="PRO_0000252289" description="Removed in mature form" evidence="1">
    <location>
        <begin position="827"/>
        <end position="855"/>
    </location>
</feature>
<feature type="domain" description="GH18" evidence="2">
    <location>
        <begin position="29"/>
        <end position="340"/>
    </location>
</feature>
<feature type="region of interest" description="Disordered" evidence="3">
    <location>
        <begin position="341"/>
        <end position="672"/>
    </location>
</feature>
<feature type="compositionally biased region" description="Low complexity" evidence="3">
    <location>
        <begin position="346"/>
        <end position="400"/>
    </location>
</feature>
<feature type="compositionally biased region" description="Polar residues" evidence="3">
    <location>
        <begin position="401"/>
        <end position="456"/>
    </location>
</feature>
<feature type="compositionally biased region" description="Low complexity" evidence="3">
    <location>
        <begin position="457"/>
        <end position="483"/>
    </location>
</feature>
<feature type="compositionally biased region" description="Polar residues" evidence="3">
    <location>
        <begin position="484"/>
        <end position="521"/>
    </location>
</feature>
<feature type="compositionally biased region" description="Low complexity" evidence="3">
    <location>
        <begin position="522"/>
        <end position="533"/>
    </location>
</feature>
<feature type="compositionally biased region" description="Polar residues" evidence="3">
    <location>
        <begin position="534"/>
        <end position="555"/>
    </location>
</feature>
<feature type="compositionally biased region" description="Low complexity" evidence="3">
    <location>
        <begin position="556"/>
        <end position="567"/>
    </location>
</feature>
<feature type="compositionally biased region" description="Polar residues" evidence="3">
    <location>
        <begin position="568"/>
        <end position="641"/>
    </location>
</feature>
<feature type="compositionally biased region" description="Low complexity" evidence="3">
    <location>
        <begin position="642"/>
        <end position="652"/>
    </location>
</feature>
<feature type="compositionally biased region" description="Low complexity" evidence="3">
    <location>
        <begin position="659"/>
        <end position="672"/>
    </location>
</feature>
<feature type="active site" description="Proton donor" evidence="2">
    <location>
        <position position="175"/>
    </location>
</feature>
<feature type="lipid moiety-binding region" description="GPI-anchor amidated glycine" evidence="1">
    <location>
        <position position="826"/>
    </location>
</feature>
<feature type="glycosylation site" description="N-linked (GlcNAc...) asparagine" evidence="1">
    <location>
        <position position="90"/>
    </location>
</feature>
<sequence>MGPTNILAAFIAVSSLFIQSLALNPYAKSNLAVYWGQGAGQNRLSYFCEKTSFDIIVVGFINVFPDQGPAGWPGSNFGNQCADSYYYTKNGTKTKLLDGCYQIKEDLPKCKALGKTILLSLGGGAVHDFYEVKSEESALNFADFLWGAFGPLTPDWTGPRPFGEASVDGFDFDIEKGSNFGYSIMVRRLRELFLQDPLNRYYISAAPQCIMPDKYLSHAISNSAFDFIFIQFYNNPSCSAKRWVTNPKSVTYTVDDWVKYIRKSGNPLAKLFIGLPASKSAAAKEDYLTPGEATKIVSTYMAKYPSTFGGMMVWEATASENNKLGGLPYADIMKEVLLRCDPDPPTSTVTSTTSASTSTQTSSQSTTMETKTLSASTTPSSPSTVSPSSTMQTTSTGSTSIETVTTRSQEPPSTTISTRSASTEPVTTRSQEPPSTTISTRSASTETVTTRSQEPPSTTISTWSASTETSTSSQDSPSTTISTKSAPTGTVTTRSQDLPSTTISTRSPETETETATTKSQGSPSITLSTRSSSAETVSTRSQHSSSTTISTKSAPTETGTTSEHSTSMPVSTRSASTETVITRSQNSDSQSMTVSTRSPSTESITTRSQGSPSETFSTKSVPVDTISTELPSQTPTTIITGTPSDPVSAPTTTVPPNPTLTLAPSSSTTEDRTTITTIITTSYVTVCPTGFTTVTITYTTTYCPETASLTPTQPPIPGAPAPPPDGWTTIVTVCPQCAPTPTTVTLTVPTRSAFLPARTETRPVVTVVPVPENPIKNVKPSESGDFVTVTTAAPATVTKTLEYNNPVDSDVNVQPTGGSSPVEFEGSAMTVRSMDVVAKALITAGAAVLGLFLGL</sequence>
<organism>
    <name type="scientific">Coccidioides posadasii (strain C735)</name>
    <name type="common">Valley fever fungus</name>
    <dbReference type="NCBI Taxonomy" id="222929"/>
    <lineage>
        <taxon>Eukaryota</taxon>
        <taxon>Fungi</taxon>
        <taxon>Dikarya</taxon>
        <taxon>Ascomycota</taxon>
        <taxon>Pezizomycotina</taxon>
        <taxon>Eurotiomycetes</taxon>
        <taxon>Eurotiomycetidae</taxon>
        <taxon>Onygenales</taxon>
        <taxon>Onygenaceae</taxon>
        <taxon>Coccidioides</taxon>
    </lineage>
</organism>